<keyword id="KW-0002">3D-structure</keyword>
<keyword id="KW-1003">Cell membrane</keyword>
<keyword id="KW-0225">Disease variant</keyword>
<keyword id="KW-1015">Disulfide bond</keyword>
<keyword id="KW-0242">Dwarfism</keyword>
<keyword id="KW-0256">Endoplasmic reticulum</keyword>
<keyword id="KW-0325">Glycoprotein</keyword>
<keyword id="KW-0991">Intellectual disability</keyword>
<keyword id="KW-0407">Ion channel</keyword>
<keyword id="KW-0406">Ion transport</keyword>
<keyword id="KW-0433">Leucine-rich repeat</keyword>
<keyword id="KW-0472">Membrane</keyword>
<keyword id="KW-0597">Phosphoprotein</keyword>
<keyword id="KW-1267">Proteomics identification</keyword>
<keyword id="KW-1185">Reference proteome</keyword>
<keyword id="KW-0677">Repeat</keyword>
<keyword id="KW-0812">Transmembrane</keyword>
<keyword id="KW-1133">Transmembrane helix</keyword>
<keyword id="KW-0813">Transport</keyword>
<accession>Q8TDW0</accession>
<accession>B3KXS9</accession>
<accession>Q29RV6</accession>
<accession>Q9H075</accession>
<sequence length="803" mass="92450">MIPVTEFRQFSEQQPAFRVLKPWWDVFTDYLSVAMLMIGVFGCTLQVMQDKIICLPKRVQPAQNHSSLSNVSQAVASTTPLPPPKPSPANPITVEMKGLKTDLDLQQYSFINQMCYERALHWYAKYFPYLVLIHTLVFMLCSNFWFKFPGSSSKIEHFISILGKCFDSPWTTRALSEVSGEDSEEKDNRKNNMNRSNTIQSGPEDSLVNSQSLKSIPEKFVVDKSTAGALDKKEGEQAKALFEKVKKFRLHVEEGDILYAMYVRQTVLKVIKFLIIIAYNSALVSKVQFTVDCNVDIQDMTGYKNFSCNHTMAHLFSKLSFCYLCFVSIYGLTCLYTLYWLFYRSLREYSFEYVRQETGIDDIPDVKNDFAFMLHMIDQYDPLYSKRFAVFLSEVSENKLKQLNLNNEWTPDKLRQKLQTNAHNRLELPLIMLSGLPDTVFEITELQSLKLEIIKNVMIPATIAQLDNLQELSLHQCSVKIHSAALSFLKENLKVLSVKFDDMRELPPWMYGLRNLEELYLVGSLSHDISRNVTLESLRDLKSLKILSIKSNVSKIPQAVVDVSSHLQKMCIHNDGTKLVMLNNLKKMTNLTELELVHCDLERIPHAVFSLLSLQELDLKENNLKSIEEIVSFQHLRKLTVLKLWHNSITYIPEHIKKLTSLERLSFSHNKIEVLPSHLFLCNKIRYLDLSYNDIRFIPPEIGVLQSLQYFSITCNKVESLPDELYFCKKLKTLKIGKNSLSVLSPKIGNLLFLSYLDVKGNHFEILPPELGDCRALKRAGLVVEDALFETLPSDVREQMKTE</sequence>
<feature type="chain" id="PRO_0000076247" description="Volume-regulated anion channel subunit LRRC8C">
    <location>
        <begin position="1"/>
        <end position="803"/>
    </location>
</feature>
<feature type="topological domain" description="Cytoplasmic" evidence="15 23 24 25 26 27">
    <location>
        <begin position="1"/>
        <end position="22"/>
    </location>
</feature>
<feature type="transmembrane region" description="Helical; Name=1" evidence="15 23 24 25 26 27">
    <location>
        <begin position="23"/>
        <end position="47"/>
    </location>
</feature>
<feature type="topological domain" description="Extracellular" evidence="15 23 24 25 26 27">
    <location>
        <begin position="48"/>
        <end position="124"/>
    </location>
</feature>
<feature type="transmembrane region" description="Helical; Name=2" evidence="15 23 24 25 26 27">
    <location>
        <begin position="125"/>
        <end position="144"/>
    </location>
</feature>
<feature type="topological domain" description="Cytoplasmic" evidence="15 23 24 25 26 27">
    <location>
        <begin position="145"/>
        <end position="262"/>
    </location>
</feature>
<feature type="transmembrane region" description="Helical; Name=3" evidence="15 23 24 25 26 27">
    <location>
        <begin position="263"/>
        <end position="284"/>
    </location>
</feature>
<feature type="topological domain" description="Extracellular" evidence="15 23 24 25 26 27">
    <location>
        <begin position="285"/>
        <end position="314"/>
    </location>
</feature>
<feature type="transmembrane region" description="Helical; Name=4" evidence="15 23 24 25 26 27">
    <location>
        <begin position="315"/>
        <end position="339"/>
    </location>
</feature>
<feature type="topological domain" description="Cytoplasmic" evidence="15 23 24 25 26 27">
    <location>
        <begin position="340"/>
        <end position="803"/>
    </location>
</feature>
<feature type="repeat" description="LRR 1" evidence="3">
    <location>
        <begin position="397"/>
        <end position="420"/>
    </location>
</feature>
<feature type="repeat" description="LRR 2" evidence="3">
    <location>
        <begin position="421"/>
        <end position="443"/>
    </location>
</feature>
<feature type="repeat" description="LRR 3" evidence="3">
    <location>
        <begin position="446"/>
        <end position="466"/>
    </location>
</feature>
<feature type="repeat" description="LRR 4" evidence="3">
    <location>
        <begin position="467"/>
        <end position="488"/>
    </location>
</feature>
<feature type="repeat" description="LRR 5" evidence="3">
    <location>
        <begin position="490"/>
        <end position="513"/>
    </location>
</feature>
<feature type="repeat" description="LRR 6" evidence="3">
    <location>
        <begin position="515"/>
        <end position="537"/>
    </location>
</feature>
<feature type="repeat" description="LRR 7" evidence="3">
    <location>
        <begin position="541"/>
        <end position="563"/>
    </location>
</feature>
<feature type="repeat" description="LRR 8" evidence="3">
    <location>
        <begin position="565"/>
        <end position="587"/>
    </location>
</feature>
<feature type="repeat" description="LRR 9" evidence="3">
    <location>
        <begin position="588"/>
        <end position="611"/>
    </location>
</feature>
<feature type="repeat" description="LRR 10" evidence="3">
    <location>
        <begin position="613"/>
        <end position="635"/>
    </location>
</feature>
<feature type="repeat" description="LRR 11" evidence="3">
    <location>
        <begin position="636"/>
        <end position="659"/>
    </location>
</feature>
<feature type="repeat" description="LRR 12" evidence="3">
    <location>
        <begin position="660"/>
        <end position="682"/>
    </location>
</feature>
<feature type="repeat" description="LRR 13" evidence="3">
    <location>
        <begin position="684"/>
        <end position="705"/>
    </location>
</feature>
<feature type="repeat" description="LRR 14" evidence="3">
    <location>
        <begin position="706"/>
        <end position="728"/>
    </location>
</feature>
<feature type="repeat" description="LRR 15" evidence="3">
    <location>
        <begin position="730"/>
        <end position="751"/>
    </location>
</feature>
<feature type="repeat" description="LRR 16" evidence="3">
    <location>
        <begin position="753"/>
        <end position="774"/>
    </location>
</feature>
<feature type="repeat" description="LRR 17" evidence="3">
    <location>
        <begin position="776"/>
        <end position="799"/>
    </location>
</feature>
<feature type="region of interest" description="Disordered" evidence="5">
    <location>
        <begin position="177"/>
        <end position="209"/>
    </location>
</feature>
<feature type="compositionally biased region" description="Polar residues" evidence="5">
    <location>
        <begin position="191"/>
        <end position="209"/>
    </location>
</feature>
<feature type="modified residue" description="Phosphoserine" evidence="28">
    <location>
        <position position="212"/>
    </location>
</feature>
<feature type="modified residue" description="Phosphoserine" evidence="1">
    <location>
        <position position="215"/>
    </location>
</feature>
<feature type="glycosylation site" description="N-linked (GlcNAc...) asparagine" evidence="4">
    <location>
        <position position="64"/>
    </location>
</feature>
<feature type="glycosylation site" description="N-linked (GlcNAc...) asparagine" evidence="4">
    <location>
        <position position="70"/>
    </location>
</feature>
<feature type="disulfide bond" evidence="23 24 25">
    <location>
        <begin position="54"/>
        <end position="308"/>
    </location>
</feature>
<feature type="disulfide bond" evidence="23 24 25">
    <location>
        <begin position="115"/>
        <end position="293"/>
    </location>
</feature>
<feature type="sequence variant" id="VAR_051129" description="In dbSNP:rs474536." evidence="6 7 8 9 28">
    <original>D</original>
    <variation>G</variation>
    <location>
        <position position="205"/>
    </location>
</feature>
<feature type="sequence variant" id="VAR_090259" description="In TIMES; likely pathogenic; increased volume-sensitive anion channel activity; the channel is active at isotonic conditions in which wild-type channels are normally closed." evidence="16">
    <original>V</original>
    <variation>L</variation>
    <location>
        <position position="390"/>
    </location>
</feature>
<feature type="sequence variant" id="VAR_051130" description="In dbSNP:rs12032393.">
    <original>N</original>
    <variation>S</variation>
    <location>
        <position position="468"/>
    </location>
</feature>
<feature type="sequence variant" id="VAR_051131" description="In dbSNP:rs12036569.">
    <original>M</original>
    <variation>I</variation>
    <location>
        <position position="800"/>
    </location>
</feature>
<feature type="mutagenesis site" description="Decreased amplitudes of swelling-activated current." evidence="13">
    <original>E</original>
    <variation>C</variation>
    <location>
        <position position="6"/>
    </location>
</feature>
<feature type="mutagenesis site" description="Alters channel anion selectivity." evidence="11">
    <original>T</original>
    <variation>C</variation>
    <location>
        <position position="44"/>
    </location>
</feature>
<feature type="sequence conflict" description="In Ref. 2; BAG54591." evidence="20" ref="2">
    <original>M</original>
    <variation>T</variation>
    <location>
        <position position="570"/>
    </location>
</feature>
<feature type="helix" evidence="29">
    <location>
        <begin position="23"/>
        <end position="48"/>
    </location>
</feature>
<feature type="strand" evidence="29">
    <location>
        <begin position="52"/>
        <end position="56"/>
    </location>
</feature>
<feature type="helix" evidence="29">
    <location>
        <begin position="107"/>
        <end position="118"/>
    </location>
</feature>
<feature type="helix" evidence="29">
    <location>
        <begin position="122"/>
        <end position="125"/>
    </location>
</feature>
<feature type="helix" evidence="29">
    <location>
        <begin position="127"/>
        <end position="143"/>
    </location>
</feature>
<feature type="strand" evidence="29">
    <location>
        <begin position="146"/>
        <end position="148"/>
    </location>
</feature>
<feature type="helix" evidence="29">
    <location>
        <begin position="153"/>
        <end position="166"/>
    </location>
</feature>
<feature type="helix" evidence="29">
    <location>
        <begin position="169"/>
        <end position="175"/>
    </location>
</feature>
<feature type="helix" evidence="29">
    <location>
        <begin position="235"/>
        <end position="253"/>
    </location>
</feature>
<feature type="strand" evidence="29">
    <location>
        <begin position="257"/>
        <end position="259"/>
    </location>
</feature>
<feature type="helix" evidence="29">
    <location>
        <begin position="260"/>
        <end position="282"/>
    </location>
</feature>
<feature type="turn" evidence="29">
    <location>
        <begin position="283"/>
        <end position="286"/>
    </location>
</feature>
<feature type="strand" evidence="29">
    <location>
        <begin position="289"/>
        <end position="294"/>
    </location>
</feature>
<feature type="turn" evidence="29">
    <location>
        <begin position="299"/>
        <end position="301"/>
    </location>
</feature>
<feature type="strand" evidence="29">
    <location>
        <begin position="304"/>
        <end position="310"/>
    </location>
</feature>
<feature type="helix" evidence="29">
    <location>
        <begin position="313"/>
        <end position="341"/>
    </location>
</feature>
<feature type="helix" evidence="29">
    <location>
        <begin position="353"/>
        <end position="358"/>
    </location>
</feature>
<feature type="helix" evidence="29">
    <location>
        <begin position="369"/>
        <end position="380"/>
    </location>
</feature>
<feature type="helix" evidence="29">
    <location>
        <begin position="384"/>
        <end position="391"/>
    </location>
</feature>
<feature type="helix" evidence="29">
    <location>
        <begin position="394"/>
        <end position="404"/>
    </location>
</feature>
<reference key="1">
    <citation type="journal article" date="2004" name="J. Cell Sci.">
        <title>Fad24, a mammalian homolog of Noc3p, is a positive regulator in adipocyte differentiation.</title>
        <authorList>
            <person name="Tominaga K."/>
            <person name="Johmura Y."/>
            <person name="Nishizuka M."/>
            <person name="Imagawa M."/>
        </authorList>
    </citation>
    <scope>NUCLEOTIDE SEQUENCE [MRNA]</scope>
    <scope>TISSUE SPECIFICITY</scope>
    <scope>VARIANT GLY-205</scope>
</reference>
<reference key="2">
    <citation type="journal article" date="2004" name="Nat. Genet.">
        <title>Complete sequencing and characterization of 21,243 full-length human cDNAs.</title>
        <authorList>
            <person name="Ota T."/>
            <person name="Suzuki Y."/>
            <person name="Nishikawa T."/>
            <person name="Otsuki T."/>
            <person name="Sugiyama T."/>
            <person name="Irie R."/>
            <person name="Wakamatsu A."/>
            <person name="Hayashi K."/>
            <person name="Sato H."/>
            <person name="Nagai K."/>
            <person name="Kimura K."/>
            <person name="Makita H."/>
            <person name="Sekine M."/>
            <person name="Obayashi M."/>
            <person name="Nishi T."/>
            <person name="Shibahara T."/>
            <person name="Tanaka T."/>
            <person name="Ishii S."/>
            <person name="Yamamoto J."/>
            <person name="Saito K."/>
            <person name="Kawai Y."/>
            <person name="Isono Y."/>
            <person name="Nakamura Y."/>
            <person name="Nagahari K."/>
            <person name="Murakami K."/>
            <person name="Yasuda T."/>
            <person name="Iwayanagi T."/>
            <person name="Wagatsuma M."/>
            <person name="Shiratori A."/>
            <person name="Sudo H."/>
            <person name="Hosoiri T."/>
            <person name="Kaku Y."/>
            <person name="Kodaira H."/>
            <person name="Kondo H."/>
            <person name="Sugawara M."/>
            <person name="Takahashi M."/>
            <person name="Kanda K."/>
            <person name="Yokoi T."/>
            <person name="Furuya T."/>
            <person name="Kikkawa E."/>
            <person name="Omura Y."/>
            <person name="Abe K."/>
            <person name="Kamihara K."/>
            <person name="Katsuta N."/>
            <person name="Sato K."/>
            <person name="Tanikawa M."/>
            <person name="Yamazaki M."/>
            <person name="Ninomiya K."/>
            <person name="Ishibashi T."/>
            <person name="Yamashita H."/>
            <person name="Murakawa K."/>
            <person name="Fujimori K."/>
            <person name="Tanai H."/>
            <person name="Kimata M."/>
            <person name="Watanabe M."/>
            <person name="Hiraoka S."/>
            <person name="Chiba Y."/>
            <person name="Ishida S."/>
            <person name="Ono Y."/>
            <person name="Takiguchi S."/>
            <person name="Watanabe S."/>
            <person name="Yosida M."/>
            <person name="Hotuta T."/>
            <person name="Kusano J."/>
            <person name="Kanehori K."/>
            <person name="Takahashi-Fujii A."/>
            <person name="Hara H."/>
            <person name="Tanase T.-O."/>
            <person name="Nomura Y."/>
            <person name="Togiya S."/>
            <person name="Komai F."/>
            <person name="Hara R."/>
            <person name="Takeuchi K."/>
            <person name="Arita M."/>
            <person name="Imose N."/>
            <person name="Musashino K."/>
            <person name="Yuuki H."/>
            <person name="Oshima A."/>
            <person name="Sasaki N."/>
            <person name="Aotsuka S."/>
            <person name="Yoshikawa Y."/>
            <person name="Matsunawa H."/>
            <person name="Ichihara T."/>
            <person name="Shiohata N."/>
            <person name="Sano S."/>
            <person name="Moriya S."/>
            <person name="Momiyama H."/>
            <person name="Satoh N."/>
            <person name="Takami S."/>
            <person name="Terashima Y."/>
            <person name="Suzuki O."/>
            <person name="Nakagawa S."/>
            <person name="Senoh A."/>
            <person name="Mizoguchi H."/>
            <person name="Goto Y."/>
            <person name="Shimizu F."/>
            <person name="Wakebe H."/>
            <person name="Hishigaki H."/>
            <person name="Watanabe T."/>
            <person name="Sugiyama A."/>
            <person name="Takemoto M."/>
            <person name="Kawakami B."/>
            <person name="Yamazaki M."/>
            <person name="Watanabe K."/>
            <person name="Kumagai A."/>
            <person name="Itakura S."/>
            <person name="Fukuzumi Y."/>
            <person name="Fujimori Y."/>
            <person name="Komiyama M."/>
            <person name="Tashiro H."/>
            <person name="Tanigami A."/>
            <person name="Fujiwara T."/>
            <person name="Ono T."/>
            <person name="Yamada K."/>
            <person name="Fujii Y."/>
            <person name="Ozaki K."/>
            <person name="Hirao M."/>
            <person name="Ohmori Y."/>
            <person name="Kawabata A."/>
            <person name="Hikiji T."/>
            <person name="Kobatake N."/>
            <person name="Inagaki H."/>
            <person name="Ikema Y."/>
            <person name="Okamoto S."/>
            <person name="Okitani R."/>
            <person name="Kawakami T."/>
            <person name="Noguchi S."/>
            <person name="Itoh T."/>
            <person name="Shigeta K."/>
            <person name="Senba T."/>
            <person name="Matsumura K."/>
            <person name="Nakajima Y."/>
            <person name="Mizuno T."/>
            <person name="Morinaga M."/>
            <person name="Sasaki M."/>
            <person name="Togashi T."/>
            <person name="Oyama M."/>
            <person name="Hata H."/>
            <person name="Watanabe M."/>
            <person name="Komatsu T."/>
            <person name="Mizushima-Sugano J."/>
            <person name="Satoh T."/>
            <person name="Shirai Y."/>
            <person name="Takahashi Y."/>
            <person name="Nakagawa K."/>
            <person name="Okumura K."/>
            <person name="Nagase T."/>
            <person name="Nomura N."/>
            <person name="Kikuchi H."/>
            <person name="Masuho Y."/>
            <person name="Yamashita R."/>
            <person name="Nakai K."/>
            <person name="Yada T."/>
            <person name="Nakamura Y."/>
            <person name="Ohara O."/>
            <person name="Isogai T."/>
            <person name="Sugano S."/>
        </authorList>
    </citation>
    <scope>NUCLEOTIDE SEQUENCE [LARGE SCALE MRNA]</scope>
    <scope>VARIANT GLY-205</scope>
</reference>
<reference key="3">
    <citation type="journal article" date="2006" name="Nature">
        <title>The DNA sequence and biological annotation of human chromosome 1.</title>
        <authorList>
            <person name="Gregory S.G."/>
            <person name="Barlow K.F."/>
            <person name="McLay K.E."/>
            <person name="Kaul R."/>
            <person name="Swarbreck D."/>
            <person name="Dunham A."/>
            <person name="Scott C.E."/>
            <person name="Howe K.L."/>
            <person name="Woodfine K."/>
            <person name="Spencer C.C.A."/>
            <person name="Jones M.C."/>
            <person name="Gillson C."/>
            <person name="Searle S."/>
            <person name="Zhou Y."/>
            <person name="Kokocinski F."/>
            <person name="McDonald L."/>
            <person name="Evans R."/>
            <person name="Phillips K."/>
            <person name="Atkinson A."/>
            <person name="Cooper R."/>
            <person name="Jones C."/>
            <person name="Hall R.E."/>
            <person name="Andrews T.D."/>
            <person name="Lloyd C."/>
            <person name="Ainscough R."/>
            <person name="Almeida J.P."/>
            <person name="Ambrose K.D."/>
            <person name="Anderson F."/>
            <person name="Andrew R.W."/>
            <person name="Ashwell R.I.S."/>
            <person name="Aubin K."/>
            <person name="Babbage A.K."/>
            <person name="Bagguley C.L."/>
            <person name="Bailey J."/>
            <person name="Beasley H."/>
            <person name="Bethel G."/>
            <person name="Bird C.P."/>
            <person name="Bray-Allen S."/>
            <person name="Brown J.Y."/>
            <person name="Brown A.J."/>
            <person name="Buckley D."/>
            <person name="Burton J."/>
            <person name="Bye J."/>
            <person name="Carder C."/>
            <person name="Chapman J.C."/>
            <person name="Clark S.Y."/>
            <person name="Clarke G."/>
            <person name="Clee C."/>
            <person name="Cobley V."/>
            <person name="Collier R.E."/>
            <person name="Corby N."/>
            <person name="Coville G.J."/>
            <person name="Davies J."/>
            <person name="Deadman R."/>
            <person name="Dunn M."/>
            <person name="Earthrowl M."/>
            <person name="Ellington A.G."/>
            <person name="Errington H."/>
            <person name="Frankish A."/>
            <person name="Frankland J."/>
            <person name="French L."/>
            <person name="Garner P."/>
            <person name="Garnett J."/>
            <person name="Gay L."/>
            <person name="Ghori M.R.J."/>
            <person name="Gibson R."/>
            <person name="Gilby L.M."/>
            <person name="Gillett W."/>
            <person name="Glithero R.J."/>
            <person name="Grafham D.V."/>
            <person name="Griffiths C."/>
            <person name="Griffiths-Jones S."/>
            <person name="Grocock R."/>
            <person name="Hammond S."/>
            <person name="Harrison E.S.I."/>
            <person name="Hart E."/>
            <person name="Haugen E."/>
            <person name="Heath P.D."/>
            <person name="Holmes S."/>
            <person name="Holt K."/>
            <person name="Howden P.J."/>
            <person name="Hunt A.R."/>
            <person name="Hunt S.E."/>
            <person name="Hunter G."/>
            <person name="Isherwood J."/>
            <person name="James R."/>
            <person name="Johnson C."/>
            <person name="Johnson D."/>
            <person name="Joy A."/>
            <person name="Kay M."/>
            <person name="Kershaw J.K."/>
            <person name="Kibukawa M."/>
            <person name="Kimberley A.M."/>
            <person name="King A."/>
            <person name="Knights A.J."/>
            <person name="Lad H."/>
            <person name="Laird G."/>
            <person name="Lawlor S."/>
            <person name="Leongamornlert D.A."/>
            <person name="Lloyd D.M."/>
            <person name="Loveland J."/>
            <person name="Lovell J."/>
            <person name="Lush M.J."/>
            <person name="Lyne R."/>
            <person name="Martin S."/>
            <person name="Mashreghi-Mohammadi M."/>
            <person name="Matthews L."/>
            <person name="Matthews N.S.W."/>
            <person name="McLaren S."/>
            <person name="Milne S."/>
            <person name="Mistry S."/>
            <person name="Moore M.J.F."/>
            <person name="Nickerson T."/>
            <person name="O'Dell C.N."/>
            <person name="Oliver K."/>
            <person name="Palmeiri A."/>
            <person name="Palmer S.A."/>
            <person name="Parker A."/>
            <person name="Patel D."/>
            <person name="Pearce A.V."/>
            <person name="Peck A.I."/>
            <person name="Pelan S."/>
            <person name="Phelps K."/>
            <person name="Phillimore B.J."/>
            <person name="Plumb R."/>
            <person name="Rajan J."/>
            <person name="Raymond C."/>
            <person name="Rouse G."/>
            <person name="Saenphimmachak C."/>
            <person name="Sehra H.K."/>
            <person name="Sheridan E."/>
            <person name="Shownkeen R."/>
            <person name="Sims S."/>
            <person name="Skuce C.D."/>
            <person name="Smith M."/>
            <person name="Steward C."/>
            <person name="Subramanian S."/>
            <person name="Sycamore N."/>
            <person name="Tracey A."/>
            <person name="Tromans A."/>
            <person name="Van Helmond Z."/>
            <person name="Wall M."/>
            <person name="Wallis J.M."/>
            <person name="White S."/>
            <person name="Whitehead S.L."/>
            <person name="Wilkinson J.E."/>
            <person name="Willey D.L."/>
            <person name="Williams H."/>
            <person name="Wilming L."/>
            <person name="Wray P.W."/>
            <person name="Wu Z."/>
            <person name="Coulson A."/>
            <person name="Vaudin M."/>
            <person name="Sulston J.E."/>
            <person name="Durbin R.M."/>
            <person name="Hubbard T."/>
            <person name="Wooster R."/>
            <person name="Dunham I."/>
            <person name="Carter N.P."/>
            <person name="McVean G."/>
            <person name="Ross M.T."/>
            <person name="Harrow J."/>
            <person name="Olson M.V."/>
            <person name="Beck S."/>
            <person name="Rogers J."/>
            <person name="Bentley D.R."/>
        </authorList>
    </citation>
    <scope>NUCLEOTIDE SEQUENCE [LARGE SCALE GENOMIC DNA]</scope>
</reference>
<reference key="4">
    <citation type="journal article" date="2004" name="Genome Res.">
        <title>The status, quality, and expansion of the NIH full-length cDNA project: the Mammalian Gene Collection (MGC).</title>
        <authorList>
            <consortium name="The MGC Project Team"/>
        </authorList>
    </citation>
    <scope>NUCLEOTIDE SEQUENCE [LARGE SCALE MRNA]</scope>
    <scope>VARIANT GLY-205</scope>
</reference>
<reference key="5">
    <citation type="journal article" date="2001" name="Genome Res.">
        <title>Towards a catalog of human genes and proteins: sequencing and analysis of 500 novel complete protein coding human cDNAs.</title>
        <authorList>
            <person name="Wiemann S."/>
            <person name="Weil B."/>
            <person name="Wellenreuther R."/>
            <person name="Gassenhuber J."/>
            <person name="Glassl S."/>
            <person name="Ansorge W."/>
            <person name="Boecher M."/>
            <person name="Bloecker H."/>
            <person name="Bauersachs S."/>
            <person name="Blum H."/>
            <person name="Lauber J."/>
            <person name="Duesterhoeft A."/>
            <person name="Beyer A."/>
            <person name="Koehrer K."/>
            <person name="Strack N."/>
            <person name="Mewes H.-W."/>
            <person name="Ottenwaelder B."/>
            <person name="Obermaier B."/>
            <person name="Tampe J."/>
            <person name="Heubner D."/>
            <person name="Wambutt R."/>
            <person name="Korn B."/>
            <person name="Klein M."/>
            <person name="Poustka A."/>
        </authorList>
    </citation>
    <scope>NUCLEOTIDE SEQUENCE [LARGE SCALE MRNA] OF 88-803</scope>
    <scope>VARIANT GLY-205</scope>
    <source>
        <tissue>Uterus</tissue>
    </source>
</reference>
<reference key="6">
    <citation type="journal article" date="2012" name="Bioessays">
        <title>LRRC8 proteins share a common ancestor with pannexins, and may form hexameric channels involved in cell-cell communication.</title>
        <authorList>
            <person name="Abascal F."/>
            <person name="Zardoya R."/>
        </authorList>
    </citation>
    <scope>IDENTIFICATION</scope>
</reference>
<reference key="7">
    <citation type="journal article" date="2013" name="J. Proteome Res.">
        <title>Toward a comprehensive characterization of a human cancer cell phosphoproteome.</title>
        <authorList>
            <person name="Zhou H."/>
            <person name="Di Palma S."/>
            <person name="Preisinger C."/>
            <person name="Peng M."/>
            <person name="Polat A.N."/>
            <person name="Heck A.J."/>
            <person name="Mohammed S."/>
        </authorList>
    </citation>
    <scope>PHOSPHORYLATION [LARGE SCALE ANALYSIS] AT SER-212</scope>
    <scope>VARIANT [LARGE SCALE ANALYSIS] GLY-205</scope>
    <scope>IDENTIFICATION BY MASS SPECTROMETRY [LARGE SCALE ANALYSIS]</scope>
    <source>
        <tissue>Erythroleukemia</tissue>
    </source>
</reference>
<reference key="8">
    <citation type="journal article" date="2014" name="Science">
        <title>Identification of LRRC8 heteromers as an essential component of the volume-regulated anion channel VRAC.</title>
        <authorList>
            <person name="Voss F.K."/>
            <person name="Ullrich F."/>
            <person name="Muench J."/>
            <person name="Lazarow K."/>
            <person name="Lutter D."/>
            <person name="Mah N."/>
            <person name="Andrade-Navarro M.A."/>
            <person name="von Kries J.P."/>
            <person name="Stauber T."/>
            <person name="Jentsch T.J."/>
        </authorList>
    </citation>
    <scope>FUNCTION</scope>
    <scope>TRANSPORTER ACTIVITY</scope>
    <scope>INTERACTION WITH LRRC8A</scope>
    <scope>SUBCELLULAR LOCATION</scope>
</reference>
<reference key="9">
    <citation type="journal article" date="2016" name="Cell">
        <title>LRRC8 proteins form volume-regulated anion channels that sense ionic strength.</title>
        <authorList>
            <person name="Syeda R."/>
            <person name="Qiu Z."/>
            <person name="Dubin A.E."/>
            <person name="Murthy S.E."/>
            <person name="Florendo M.N."/>
            <person name="Mason D.E."/>
            <person name="Mathur J."/>
            <person name="Cahalan S.M."/>
            <person name="Peters E.C."/>
            <person name="Montal M."/>
            <person name="Patapoutian A."/>
        </authorList>
    </citation>
    <scope>FUNCTION</scope>
    <scope>SUBCELLULAR LOCATION</scope>
    <scope>SUBUNIT</scope>
    <scope>IDENTIFICATION BY MASS SPECTROMETRY</scope>
    <scope>MUTAGENESIS OF THR-44</scope>
</reference>
<reference key="10">
    <citation type="journal article" date="2017" name="J. Cell Sci.">
        <title>Selective transport of neurotransmitters and modulators by distinct volume-regulated LRRC8 anion channels.</title>
        <authorList>
            <person name="Lutter D."/>
            <person name="Ullrich F."/>
            <person name="Lueck J.C."/>
            <person name="Kempa S."/>
            <person name="Jentsch T.J."/>
        </authorList>
    </citation>
    <scope>FUNCTION</scope>
    <scope>SUBCELLULAR LOCATION</scope>
    <scope>SUBUNIT</scope>
</reference>
<reference key="11">
    <citation type="journal article" date="2018" name="J. Biol. Chem.">
        <title>LRRC8 N termini influence pore properties and gating of volume-regulated anion channels (VRACs).</title>
        <authorList>
            <person name="Zhou P."/>
            <person name="Polovitskaya M.M."/>
            <person name="Jentsch T.J."/>
        </authorList>
    </citation>
    <scope>DOMAIN</scope>
    <scope>MUTAGENESIS OF GLU-6</scope>
</reference>
<reference key="12">
    <citation type="journal article" date="2020" name="Mol. Cell">
        <title>LRRC8A:C/E heteromeric channels are ubiquitous transporters of cGAMP.</title>
        <authorList>
            <person name="Lahey L.J."/>
            <person name="Mardjuki R.E."/>
            <person name="Wen X."/>
            <person name="Hess G.T."/>
            <person name="Ritchie C."/>
            <person name="Carozza J.A."/>
            <person name="Boehnert V."/>
            <person name="Maduke M."/>
            <person name="Bassik M.C."/>
            <person name="Li L."/>
        </authorList>
    </citation>
    <scope>FUNCTION</scope>
    <scope>TRANSPORTER ACTIVITY</scope>
</reference>
<reference key="13">
    <citation type="journal article" date="2025" name="EMBO J.">
        <title>De novo variants in LRRC8C resulting in constitutive channel activation cause a human multisystem disorder.</title>
        <authorList>
            <person name="Quinodoz M."/>
            <person name="Rutz S."/>
            <person name="Peter V."/>
            <person name="Garavelli L."/>
            <person name="Innes A.M."/>
            <person name="Lehmann E.F."/>
            <person name="Kellenberger S."/>
            <person name="Peng Z."/>
            <person name="Barone A."/>
            <person name="Campos-Xavier B."/>
            <person name="Unger S."/>
            <person name="Rivolta C."/>
            <person name="Dutzler R."/>
            <person name="Superti-Furga A."/>
        </authorList>
    </citation>
    <scope>VARIANT TIMES LEU-390</scope>
    <scope>INVOLVEMENT IN TIMES</scope>
    <scope>CHARACTERIZATION OF VARIANT TIMES LEU-390</scope>
    <scope>FUNCTION</scope>
</reference>
<reference evidence="23 24 25 26 27" key="14">
    <citation type="journal article" date="2023" name="Elife">
        <title>Cryo-EM structures of an LRRC8 chimera with native functional properties reveal heptameric assembly.</title>
        <authorList>
            <person name="Takahashi H."/>
            <person name="Yamada T."/>
            <person name="Denton J.S."/>
            <person name="Strange K."/>
            <person name="Karakas E."/>
        </authorList>
    </citation>
    <scope>STRUCTURE BY ELECTRON MICROSCOPY (3.40 ANGSTROMS) OF 1-183 AND 206-803 IN COMPLEX WITH LRRC8A</scope>
    <scope>FUNCTION</scope>
    <scope>TRANSPORTER ACTIVITY</scope>
    <scope>TOPOLOGY</scope>
    <scope>DISULFIDE BONDS</scope>
</reference>
<dbReference type="EMBL" id="AB081509">
    <property type="protein sequence ID" value="BAB86303.1"/>
    <property type="molecule type" value="mRNA"/>
</dbReference>
<dbReference type="EMBL" id="AK127881">
    <property type="protein sequence ID" value="BAG54591.1"/>
    <property type="molecule type" value="mRNA"/>
</dbReference>
<dbReference type="EMBL" id="AC093423">
    <property type="status" value="NOT_ANNOTATED_CDS"/>
    <property type="molecule type" value="Genomic_DNA"/>
</dbReference>
<dbReference type="EMBL" id="BC113973">
    <property type="protein sequence ID" value="AAI13974.1"/>
    <property type="molecule type" value="mRNA"/>
</dbReference>
<dbReference type="EMBL" id="AL136919">
    <property type="protein sequence ID" value="CAB66853.2"/>
    <property type="molecule type" value="mRNA"/>
</dbReference>
<dbReference type="CCDS" id="CCDS725.1"/>
<dbReference type="RefSeq" id="NP_115646.2">
    <property type="nucleotide sequence ID" value="NM_032270.4"/>
</dbReference>
<dbReference type="RefSeq" id="XP_011540584.1">
    <property type="nucleotide sequence ID" value="XM_011542282.3"/>
</dbReference>
<dbReference type="RefSeq" id="XP_016857992.1">
    <property type="nucleotide sequence ID" value="XM_017002503.1"/>
</dbReference>
<dbReference type="PDB" id="8DXN">
    <property type="method" value="EM"/>
    <property type="resolution" value="3.40 A"/>
    <property type="chains" value="A/B/C/D/E/F/G=7-183, A/B/C/D/E/F/G=206-803"/>
</dbReference>
<dbReference type="PDB" id="8DXO">
    <property type="method" value="EM"/>
    <property type="resolution" value="3.60 A"/>
    <property type="chains" value="A/B/C/D/E/F/G=7-183, A/B/C/D/E/F/G=206-803"/>
</dbReference>
<dbReference type="PDB" id="8DXP">
    <property type="method" value="EM"/>
    <property type="resolution" value="3.70 A"/>
    <property type="chains" value="A/B/C/D/E/F/G=1-183, A/B/C/D/E/F/G=206-803"/>
</dbReference>
<dbReference type="PDB" id="8DXQ">
    <property type="method" value="EM"/>
    <property type="resolution" value="3.80 A"/>
    <property type="chains" value="A/B/C/D/E/F/G=1-183, A/B/C/D/E/F/G=206-803"/>
</dbReference>
<dbReference type="PDB" id="8DXR">
    <property type="method" value="EM"/>
    <property type="resolution" value="4.00 A"/>
    <property type="chains" value="A/B/C/D/E/F/G=1-183, A/B/C/D/E/F/G=206-803"/>
</dbReference>
<dbReference type="PDB" id="8RTS">
    <property type="method" value="EM"/>
    <property type="resolution" value="3.73 A"/>
    <property type="chains" value="A/B/C/D/E/F/G=2-801"/>
</dbReference>
<dbReference type="PDB" id="9EZC">
    <property type="method" value="EM"/>
    <property type="resolution" value="3.41 A"/>
    <property type="chains" value="A/B/C/D/E/F/G=2-406"/>
</dbReference>
<dbReference type="PDB" id="9F16">
    <property type="method" value="EM"/>
    <property type="resolution" value="4.40 A"/>
    <property type="chains" value="A/B/C/D/E/F/G=2-801"/>
</dbReference>
<dbReference type="PDBsum" id="8DXN"/>
<dbReference type="PDBsum" id="8DXO"/>
<dbReference type="PDBsum" id="8DXP"/>
<dbReference type="PDBsum" id="8DXQ"/>
<dbReference type="PDBsum" id="8DXR"/>
<dbReference type="PDBsum" id="8RTS"/>
<dbReference type="PDBsum" id="9EZC"/>
<dbReference type="PDBsum" id="9F16"/>
<dbReference type="EMDB" id="EMD-19495"/>
<dbReference type="EMDB" id="EMD-27770"/>
<dbReference type="EMDB" id="EMD-27771"/>
<dbReference type="EMDB" id="EMD-27772"/>
<dbReference type="EMDB" id="EMD-27773"/>
<dbReference type="EMDB" id="EMD-27774"/>
<dbReference type="EMDB" id="EMD-50072"/>
<dbReference type="EMDB" id="EMD-50073"/>
<dbReference type="EMDB" id="EMD-50074"/>
<dbReference type="EMDB" id="EMD-50123"/>
<dbReference type="SMR" id="Q8TDW0"/>
<dbReference type="BioGRID" id="123963">
    <property type="interactions" value="37"/>
</dbReference>
<dbReference type="CORUM" id="Q8TDW0"/>
<dbReference type="DIP" id="DIP-61362N"/>
<dbReference type="FunCoup" id="Q8TDW0">
    <property type="interactions" value="527"/>
</dbReference>
<dbReference type="IntAct" id="Q8TDW0">
    <property type="interactions" value="23"/>
</dbReference>
<dbReference type="STRING" id="9606.ENSP00000359483"/>
<dbReference type="TCDB" id="1.A.25.3.1">
    <property type="family name" value="the gap junction-forming innexin (innexin) family"/>
</dbReference>
<dbReference type="GlyCosmos" id="Q8TDW0">
    <property type="glycosylation" value="4 sites, 1 glycan"/>
</dbReference>
<dbReference type="GlyGen" id="Q8TDW0">
    <property type="glycosylation" value="6 sites, 4 N-linked glycans (4 sites), 1 O-linked glycan (2 sites)"/>
</dbReference>
<dbReference type="iPTMnet" id="Q8TDW0"/>
<dbReference type="PhosphoSitePlus" id="Q8TDW0"/>
<dbReference type="BioMuta" id="LRRC8C"/>
<dbReference type="DMDM" id="317373383"/>
<dbReference type="jPOST" id="Q8TDW0"/>
<dbReference type="MassIVE" id="Q8TDW0"/>
<dbReference type="PaxDb" id="9606-ENSP00000359483"/>
<dbReference type="PeptideAtlas" id="Q8TDW0"/>
<dbReference type="ProteomicsDB" id="74345"/>
<dbReference type="Pumba" id="Q8TDW0"/>
<dbReference type="Antibodypedia" id="33620">
    <property type="antibodies" value="23 antibodies from 14 providers"/>
</dbReference>
<dbReference type="DNASU" id="84230"/>
<dbReference type="Ensembl" id="ENST00000370454.9">
    <property type="protein sequence ID" value="ENSP00000359483.4"/>
    <property type="gene ID" value="ENSG00000171488.15"/>
</dbReference>
<dbReference type="GeneID" id="84230"/>
<dbReference type="KEGG" id="hsa:84230"/>
<dbReference type="MANE-Select" id="ENST00000370454.9">
    <property type="protein sequence ID" value="ENSP00000359483.4"/>
    <property type="RefSeq nucleotide sequence ID" value="NM_032270.5"/>
    <property type="RefSeq protein sequence ID" value="NP_115646.3"/>
</dbReference>
<dbReference type="UCSC" id="uc001dnl.5">
    <property type="organism name" value="human"/>
</dbReference>
<dbReference type="AGR" id="HGNC:25075"/>
<dbReference type="CTD" id="84230"/>
<dbReference type="DisGeNET" id="84230"/>
<dbReference type="GeneCards" id="LRRC8C"/>
<dbReference type="HGNC" id="HGNC:25075">
    <property type="gene designation" value="LRRC8C"/>
</dbReference>
<dbReference type="HPA" id="ENSG00000171488">
    <property type="expression patterns" value="Low tissue specificity"/>
</dbReference>
<dbReference type="MIM" id="612889">
    <property type="type" value="gene"/>
</dbReference>
<dbReference type="MIM" id="621056">
    <property type="type" value="phenotype"/>
</dbReference>
<dbReference type="neXtProt" id="NX_Q8TDW0"/>
<dbReference type="OpenTargets" id="ENSG00000171488"/>
<dbReference type="PharmGKB" id="PA142671536"/>
<dbReference type="VEuPathDB" id="HostDB:ENSG00000171488"/>
<dbReference type="eggNOG" id="KOG0619">
    <property type="taxonomic scope" value="Eukaryota"/>
</dbReference>
<dbReference type="GeneTree" id="ENSGT00940000159250"/>
<dbReference type="HOGENOM" id="CLU_019019_0_0_1"/>
<dbReference type="InParanoid" id="Q8TDW0"/>
<dbReference type="OMA" id="YNSIMYI"/>
<dbReference type="OrthoDB" id="660555at2759"/>
<dbReference type="PAN-GO" id="Q8TDW0">
    <property type="GO annotations" value="0 GO annotations based on evolutionary models"/>
</dbReference>
<dbReference type="PhylomeDB" id="Q8TDW0"/>
<dbReference type="TreeFam" id="TF331443"/>
<dbReference type="PathwayCommons" id="Q8TDW0"/>
<dbReference type="Reactome" id="R-HSA-5223345">
    <property type="pathway name" value="Miscellaneous transport and binding events"/>
</dbReference>
<dbReference type="SignaLink" id="Q8TDW0"/>
<dbReference type="BioGRID-ORCS" id="84230">
    <property type="hits" value="15 hits in 1159 CRISPR screens"/>
</dbReference>
<dbReference type="ChiTaRS" id="LRRC8C">
    <property type="organism name" value="human"/>
</dbReference>
<dbReference type="GenomeRNAi" id="84230"/>
<dbReference type="Pharos" id="Q8TDW0">
    <property type="development level" value="Tbio"/>
</dbReference>
<dbReference type="PRO" id="PR:Q8TDW0"/>
<dbReference type="Proteomes" id="UP000005640">
    <property type="component" value="Chromosome 1"/>
</dbReference>
<dbReference type="RNAct" id="Q8TDW0">
    <property type="molecule type" value="protein"/>
</dbReference>
<dbReference type="Bgee" id="ENSG00000171488">
    <property type="expression patterns" value="Expressed in sperm and 183 other cell types or tissues"/>
</dbReference>
<dbReference type="ExpressionAtlas" id="Q8TDW0">
    <property type="expression patterns" value="baseline and differential"/>
</dbReference>
<dbReference type="GO" id="GO:0005737">
    <property type="term" value="C:cytoplasm"/>
    <property type="evidence" value="ECO:0000314"/>
    <property type="project" value="UniProtKB"/>
</dbReference>
<dbReference type="GO" id="GO:0005789">
    <property type="term" value="C:endoplasmic reticulum membrane"/>
    <property type="evidence" value="ECO:0007669"/>
    <property type="project" value="UniProtKB-SubCell"/>
</dbReference>
<dbReference type="GO" id="GO:0016020">
    <property type="term" value="C:membrane"/>
    <property type="evidence" value="ECO:0007005"/>
    <property type="project" value="UniProtKB"/>
</dbReference>
<dbReference type="GO" id="GO:0034702">
    <property type="term" value="C:monoatomic ion channel complex"/>
    <property type="evidence" value="ECO:0000250"/>
    <property type="project" value="UniProtKB"/>
</dbReference>
<dbReference type="GO" id="GO:0005886">
    <property type="term" value="C:plasma membrane"/>
    <property type="evidence" value="ECO:0000314"/>
    <property type="project" value="UniProtKB"/>
</dbReference>
<dbReference type="GO" id="GO:0005225">
    <property type="term" value="F:volume-sensitive anion channel activity"/>
    <property type="evidence" value="ECO:0000315"/>
    <property type="project" value="UniProtKB"/>
</dbReference>
<dbReference type="GO" id="GO:0015810">
    <property type="term" value="P:aspartate transmembrane transport"/>
    <property type="evidence" value="ECO:0000318"/>
    <property type="project" value="GO_Central"/>
</dbReference>
<dbReference type="GO" id="GO:0071470">
    <property type="term" value="P:cellular response to osmotic stress"/>
    <property type="evidence" value="ECO:0007669"/>
    <property type="project" value="Ensembl"/>
</dbReference>
<dbReference type="GO" id="GO:0140361">
    <property type="term" value="P:cyclic-GMP-AMP transmembrane import across plasma membrane"/>
    <property type="evidence" value="ECO:0000314"/>
    <property type="project" value="UniProtKB"/>
</dbReference>
<dbReference type="GO" id="GO:0045444">
    <property type="term" value="P:fat cell differentiation"/>
    <property type="evidence" value="ECO:0007669"/>
    <property type="project" value="Ensembl"/>
</dbReference>
<dbReference type="GO" id="GO:0035556">
    <property type="term" value="P:intracellular signal transduction"/>
    <property type="evidence" value="ECO:0000318"/>
    <property type="project" value="GO_Central"/>
</dbReference>
<dbReference type="GO" id="GO:0098656">
    <property type="term" value="P:monoatomic anion transmembrane transport"/>
    <property type="evidence" value="ECO:0000315"/>
    <property type="project" value="UniProtKB"/>
</dbReference>
<dbReference type="GO" id="GO:0034214">
    <property type="term" value="P:protein hexamerization"/>
    <property type="evidence" value="ECO:0000250"/>
    <property type="project" value="UniProtKB"/>
</dbReference>
<dbReference type="GO" id="GO:0015734">
    <property type="term" value="P:taurine transmembrane transport"/>
    <property type="evidence" value="ECO:0007669"/>
    <property type="project" value="Ensembl"/>
</dbReference>
<dbReference type="FunFam" id="3.80.10.10:FF:000156">
    <property type="entry name" value="volume-regulated anion channel subunit LRRC8C isoform X2"/>
    <property type="match status" value="1"/>
</dbReference>
<dbReference type="FunFam" id="3.80.10.10:FF:000182">
    <property type="entry name" value="volume-regulated anion channel subunit LRRC8C isoform X2"/>
    <property type="match status" value="1"/>
</dbReference>
<dbReference type="Gene3D" id="3.80.10.10">
    <property type="entry name" value="Ribonuclease Inhibitor"/>
    <property type="match status" value="1"/>
</dbReference>
<dbReference type="InterPro" id="IPR001611">
    <property type="entry name" value="Leu-rich_rpt"/>
</dbReference>
<dbReference type="InterPro" id="IPR003591">
    <property type="entry name" value="Leu-rich_rpt_typical-subtyp"/>
</dbReference>
<dbReference type="InterPro" id="IPR032675">
    <property type="entry name" value="LRR_dom_sf"/>
</dbReference>
<dbReference type="InterPro" id="IPR050216">
    <property type="entry name" value="LRR_domain-containing"/>
</dbReference>
<dbReference type="InterPro" id="IPR021040">
    <property type="entry name" value="LRRC8_Pannexin-like"/>
</dbReference>
<dbReference type="PANTHER" id="PTHR48051">
    <property type="match status" value="1"/>
</dbReference>
<dbReference type="PANTHER" id="PTHR48051:SF1">
    <property type="entry name" value="RAS SUPPRESSOR PROTEIN 1"/>
    <property type="match status" value="1"/>
</dbReference>
<dbReference type="Pfam" id="PF13855">
    <property type="entry name" value="LRR_8"/>
    <property type="match status" value="1"/>
</dbReference>
<dbReference type="Pfam" id="PF12534">
    <property type="entry name" value="Pannexin_like"/>
    <property type="match status" value="1"/>
</dbReference>
<dbReference type="SMART" id="SM00369">
    <property type="entry name" value="LRR_TYP"/>
    <property type="match status" value="7"/>
</dbReference>
<dbReference type="SUPFAM" id="SSF52058">
    <property type="entry name" value="L domain-like"/>
    <property type="match status" value="1"/>
</dbReference>
<dbReference type="PROSITE" id="PS51450">
    <property type="entry name" value="LRR"/>
    <property type="match status" value="7"/>
</dbReference>
<gene>
    <name evidence="18 22" type="primary">LRRC8C</name>
    <name evidence="17" type="synonym">AD158</name>
    <name evidence="17" type="synonym">FAD158</name>
</gene>
<evidence type="ECO:0000250" key="1">
    <source>
        <dbReference type="UniProtKB" id="Q498T9"/>
    </source>
</evidence>
<evidence type="ECO:0000250" key="2">
    <source>
        <dbReference type="UniProtKB" id="Q8IWT6"/>
    </source>
</evidence>
<evidence type="ECO:0000250" key="3">
    <source>
        <dbReference type="UniProtKB" id="Q8R502"/>
    </source>
</evidence>
<evidence type="ECO:0000255" key="4"/>
<evidence type="ECO:0000256" key="5">
    <source>
        <dbReference type="SAM" id="MobiDB-lite"/>
    </source>
</evidence>
<evidence type="ECO:0000269" key="6">
    <source>
    </source>
</evidence>
<evidence type="ECO:0000269" key="7">
    <source>
    </source>
</evidence>
<evidence type="ECO:0000269" key="8">
    <source>
    </source>
</evidence>
<evidence type="ECO:0000269" key="9">
    <source>
    </source>
</evidence>
<evidence type="ECO:0000269" key="10">
    <source>
    </source>
</evidence>
<evidence type="ECO:0000269" key="11">
    <source>
    </source>
</evidence>
<evidence type="ECO:0000269" key="12">
    <source>
    </source>
</evidence>
<evidence type="ECO:0000269" key="13">
    <source>
    </source>
</evidence>
<evidence type="ECO:0000269" key="14">
    <source>
    </source>
</evidence>
<evidence type="ECO:0000269" key="15">
    <source>
    </source>
</evidence>
<evidence type="ECO:0000269" key="16">
    <source>
    </source>
</evidence>
<evidence type="ECO:0000303" key="17">
    <source>
    </source>
</evidence>
<evidence type="ECO:0000303" key="18">
    <source>
    </source>
</evidence>
<evidence type="ECO:0000303" key="19">
    <source>
    </source>
</evidence>
<evidence type="ECO:0000305" key="20"/>
<evidence type="ECO:0000305" key="21">
    <source>
    </source>
</evidence>
<evidence type="ECO:0000312" key="22">
    <source>
        <dbReference type="HGNC" id="HGNC:25075"/>
    </source>
</evidence>
<evidence type="ECO:0007744" key="23">
    <source>
        <dbReference type="PDB" id="8DXN"/>
    </source>
</evidence>
<evidence type="ECO:0007744" key="24">
    <source>
        <dbReference type="PDB" id="8DXO"/>
    </source>
</evidence>
<evidence type="ECO:0007744" key="25">
    <source>
        <dbReference type="PDB" id="8DXP"/>
    </source>
</evidence>
<evidence type="ECO:0007744" key="26">
    <source>
        <dbReference type="PDB" id="8DXQ"/>
    </source>
</evidence>
<evidence type="ECO:0007744" key="27">
    <source>
        <dbReference type="PDB" id="8DXR"/>
    </source>
</evidence>
<evidence type="ECO:0007744" key="28">
    <source>
    </source>
</evidence>
<evidence type="ECO:0007829" key="29">
    <source>
        <dbReference type="PDB" id="8DXN"/>
    </source>
</evidence>
<protein>
    <recommendedName>
        <fullName evidence="19">Volume-regulated anion channel subunit LRRC8C</fullName>
    </recommendedName>
    <alternativeName>
        <fullName evidence="17">Factor for adipocyte differentiation 158</fullName>
    </alternativeName>
    <alternativeName>
        <fullName evidence="18">Leucine-rich repeat-containing protein 8C</fullName>
    </alternativeName>
</protein>
<name>LRC8C_HUMAN</name>
<comment type="function">
    <text evidence="10 11 12 14 15 16">Non-essential component of the volume-regulated anion channel (VRAC, also named VSOAC channel), an anion channel required to maintain a constant cell volume in response to extracellular or intracellular osmotic changes (PubMed:24790029, PubMed:26824658, PubMed:28193731, PubMed:36897307, PubMed:39623139). The VRAC channel conducts iodide better than chloride and can also conduct organic osmolytes like taurine (PubMed:24790029, PubMed:26824658, PubMed:28193731). Plays a redundant role in the efflux of amino acids, such as aspartate and glutamate, in response to osmotic stress (PubMed:24790029, PubMed:26824658, PubMed:28193731). The VRAC channel also mediates transport of immunoreactive cyclic dinucleotide GMP-AMP (2'-3'-cGAMP), an immune messenger produced in response to DNA virus in the cytosol (PubMed:33171122). Channel activity requires LRRC8A plus at least one other family member (LRRC8B, LRRC8C, LRRC8D or LRRC8E); channel characteristics depend on the precise subunit composition (PubMed:24790029, PubMed:26824658, PubMed:28193731).</text>
</comment>
<comment type="catalytic activity">
    <reaction evidence="15 21">
        <text>chloride(in) = chloride(out)</text>
        <dbReference type="Rhea" id="RHEA:29823"/>
        <dbReference type="ChEBI" id="CHEBI:17996"/>
    </reaction>
</comment>
<comment type="catalytic activity">
    <reaction evidence="21">
        <text>iodide(out) = iodide(in)</text>
        <dbReference type="Rhea" id="RHEA:66324"/>
        <dbReference type="ChEBI" id="CHEBI:16382"/>
    </reaction>
</comment>
<comment type="catalytic activity">
    <reaction evidence="21">
        <text>taurine(out) = taurine(in)</text>
        <dbReference type="Rhea" id="RHEA:66328"/>
        <dbReference type="ChEBI" id="CHEBI:507393"/>
    </reaction>
</comment>
<comment type="catalytic activity">
    <reaction evidence="14">
        <text>2',3'-cGAMP(out) = 2',3'-cGAMP(in)</text>
        <dbReference type="Rhea" id="RHEA:66320"/>
        <dbReference type="ChEBI" id="CHEBI:143093"/>
    </reaction>
    <physiologicalReaction direction="left-to-right" evidence="14">
        <dbReference type="Rhea" id="RHEA:66321"/>
    </physiologicalReaction>
    <physiologicalReaction direction="right-to-left" evidence="14">
        <dbReference type="Rhea" id="RHEA:66322"/>
    </physiologicalReaction>
</comment>
<comment type="subunit">
    <text evidence="3 12">Heterohexamer; oligomerizes with other LRRC8 proteins (LRRC8A, LRRC8B, LRRC8D and/or LRRC8E) to form a heterohexamer (PubMed:28193731). Homoheptamer; inactive, likely because it is not targeted to the plasma membrane in the absence of LRRC8A (By similarity). In vivo, the subunit composition may depend primarily on expression levels, and heterooligomeric channels containing various proportions of the different LRRC8 proteins may coexist (By similarity).</text>
</comment>
<comment type="interaction">
    <interactant intactId="EBI-6916516">
        <id>Q8TDW0</id>
    </interactant>
    <interactant intactId="EBI-10970086">
        <id>Q8IWT6</id>
        <label>LRRC8A</label>
    </interactant>
    <organismsDiffer>false</organismsDiffer>
    <experiments>2</experiments>
</comment>
<comment type="subcellular location">
    <subcellularLocation>
        <location evidence="10 12">Cell membrane</location>
        <topology evidence="20">Multi-pass membrane protein</topology>
    </subcellularLocation>
    <subcellularLocation>
        <location evidence="21">Endoplasmic reticulum membrane</location>
    </subcellularLocation>
    <text evidence="10">In the absence of LRRC8A, resides primarily in a cytoplasmic compartment, probably the endoplasmic reticulum. Requires LRRC8A for expression at the cell membrane.</text>
</comment>
<comment type="tissue specificity">
    <text evidence="9">Expressed at highest levels in skeletal muscle, and at moderate levels in heart, lung and peripheral blood leukocytes.</text>
</comment>
<comment type="domain">
    <text evidence="2">The volume-regulated anion channel (VRAC) channel forms a trimer of dimers, with symmetry mismatch between the pore-forming domain and the cytosolic LRR repeats, a topology similar to gap junction proteins.</text>
</comment>
<comment type="domain">
    <text evidence="13">The cytoplasmic N-terminus preceding the first transmembrane (residues 1-22) regulates volume-regulated anion channel (VRAC) conductance, ion permeability and inactivation gating.</text>
</comment>
<comment type="disease" evidence="16">
    <disease id="DI-06977">
        <name>Telangiectasia, impaired intellectual development, microcephaly, metaphyseal dysplasia, eye abnormalities, and short stature</name>
        <acronym>TIMES</acronym>
        <description>An autosomal dominant, pleiotropic disorder characterized by variable features that include telangiectasia, gastrointestinal vascular dysplasia, intellectual disability, skeletal dysplasia with fragile bones, short stature, and eye abnormalities. Patients exhibit striking cutis marmorata in infancy.</description>
        <dbReference type="MIM" id="621056"/>
    </disease>
    <text>The disease is caused by variants affecting the gene represented in this entry.</text>
</comment>
<comment type="similarity">
    <text evidence="20">Belongs to the LRRC8 family.</text>
</comment>
<organism>
    <name type="scientific">Homo sapiens</name>
    <name type="common">Human</name>
    <dbReference type="NCBI Taxonomy" id="9606"/>
    <lineage>
        <taxon>Eukaryota</taxon>
        <taxon>Metazoa</taxon>
        <taxon>Chordata</taxon>
        <taxon>Craniata</taxon>
        <taxon>Vertebrata</taxon>
        <taxon>Euteleostomi</taxon>
        <taxon>Mammalia</taxon>
        <taxon>Eutheria</taxon>
        <taxon>Euarchontoglires</taxon>
        <taxon>Primates</taxon>
        <taxon>Haplorrhini</taxon>
        <taxon>Catarrhini</taxon>
        <taxon>Hominidae</taxon>
        <taxon>Homo</taxon>
    </lineage>
</organism>
<proteinExistence type="evidence at protein level"/>